<sequence>MPRRRVIGQRKILPDPKFGSELLAKFVNILMVDGKKSTAESIVYSALETLAQRSGKSELEAFEVALENVRPTVEVKSRRVGGSTYQVPVEVRPVRRNALAMRWIVEAARKRGDKSMALRLANELSDAADNKGTAVKKREDVHRMAEANKAFAHYRW</sequence>
<organism>
    <name type="scientific">Salmonella paratyphi A (strain ATCC 9150 / SARB42)</name>
    <dbReference type="NCBI Taxonomy" id="295319"/>
    <lineage>
        <taxon>Bacteria</taxon>
        <taxon>Pseudomonadati</taxon>
        <taxon>Pseudomonadota</taxon>
        <taxon>Gammaproteobacteria</taxon>
        <taxon>Enterobacterales</taxon>
        <taxon>Enterobacteriaceae</taxon>
        <taxon>Salmonella</taxon>
    </lineage>
</organism>
<protein>
    <recommendedName>
        <fullName evidence="1">Small ribosomal subunit protein uS7</fullName>
    </recommendedName>
    <alternativeName>
        <fullName evidence="2">30S ribosomal protein S7</fullName>
    </alternativeName>
</protein>
<reference key="1">
    <citation type="journal article" date="2004" name="Nat. Genet.">
        <title>Comparison of genome degradation in Paratyphi A and Typhi, human-restricted serovars of Salmonella enterica that cause typhoid.</title>
        <authorList>
            <person name="McClelland M."/>
            <person name="Sanderson K.E."/>
            <person name="Clifton S.W."/>
            <person name="Latreille P."/>
            <person name="Porwollik S."/>
            <person name="Sabo A."/>
            <person name="Meyer R."/>
            <person name="Bieri T."/>
            <person name="Ozersky P."/>
            <person name="McLellan M."/>
            <person name="Harkins C.R."/>
            <person name="Wang C."/>
            <person name="Nguyen C."/>
            <person name="Berghoff A."/>
            <person name="Elliott G."/>
            <person name="Kohlberg S."/>
            <person name="Strong C."/>
            <person name="Du F."/>
            <person name="Carter J."/>
            <person name="Kremizki C."/>
            <person name="Layman D."/>
            <person name="Leonard S."/>
            <person name="Sun H."/>
            <person name="Fulton L."/>
            <person name="Nash W."/>
            <person name="Miner T."/>
            <person name="Minx P."/>
            <person name="Delehaunty K."/>
            <person name="Fronick C."/>
            <person name="Magrini V."/>
            <person name="Nhan M."/>
            <person name="Warren W."/>
            <person name="Florea L."/>
            <person name="Spieth J."/>
            <person name="Wilson R.K."/>
        </authorList>
    </citation>
    <scope>NUCLEOTIDE SEQUENCE [LARGE SCALE GENOMIC DNA]</scope>
    <source>
        <strain>ATCC 9150 / SARB42</strain>
    </source>
</reference>
<proteinExistence type="inferred from homology"/>
<dbReference type="EMBL" id="CP000026">
    <property type="protein sequence ID" value="AAV79129.1"/>
    <property type="molecule type" value="Genomic_DNA"/>
</dbReference>
<dbReference type="RefSeq" id="WP_001138042.1">
    <property type="nucleotide sequence ID" value="NC_006511.1"/>
</dbReference>
<dbReference type="SMR" id="Q5PIW2"/>
<dbReference type="GeneID" id="92804583"/>
<dbReference type="KEGG" id="spt:SPA3313"/>
<dbReference type="HOGENOM" id="CLU_072226_1_1_6"/>
<dbReference type="Proteomes" id="UP000008185">
    <property type="component" value="Chromosome"/>
</dbReference>
<dbReference type="GO" id="GO:0015935">
    <property type="term" value="C:small ribosomal subunit"/>
    <property type="evidence" value="ECO:0007669"/>
    <property type="project" value="InterPro"/>
</dbReference>
<dbReference type="GO" id="GO:0019843">
    <property type="term" value="F:rRNA binding"/>
    <property type="evidence" value="ECO:0007669"/>
    <property type="project" value="UniProtKB-UniRule"/>
</dbReference>
<dbReference type="GO" id="GO:0003735">
    <property type="term" value="F:structural constituent of ribosome"/>
    <property type="evidence" value="ECO:0007669"/>
    <property type="project" value="InterPro"/>
</dbReference>
<dbReference type="GO" id="GO:0000049">
    <property type="term" value="F:tRNA binding"/>
    <property type="evidence" value="ECO:0007669"/>
    <property type="project" value="UniProtKB-UniRule"/>
</dbReference>
<dbReference type="GO" id="GO:0006412">
    <property type="term" value="P:translation"/>
    <property type="evidence" value="ECO:0007669"/>
    <property type="project" value="UniProtKB-UniRule"/>
</dbReference>
<dbReference type="CDD" id="cd14869">
    <property type="entry name" value="uS7_Bacteria"/>
    <property type="match status" value="1"/>
</dbReference>
<dbReference type="FunFam" id="1.10.455.10:FF:000001">
    <property type="entry name" value="30S ribosomal protein S7"/>
    <property type="match status" value="1"/>
</dbReference>
<dbReference type="Gene3D" id="1.10.455.10">
    <property type="entry name" value="Ribosomal protein S7 domain"/>
    <property type="match status" value="1"/>
</dbReference>
<dbReference type="HAMAP" id="MF_00480_B">
    <property type="entry name" value="Ribosomal_uS7_B"/>
    <property type="match status" value="1"/>
</dbReference>
<dbReference type="InterPro" id="IPR000235">
    <property type="entry name" value="Ribosomal_uS7"/>
</dbReference>
<dbReference type="InterPro" id="IPR005717">
    <property type="entry name" value="Ribosomal_uS7_bac/org-type"/>
</dbReference>
<dbReference type="InterPro" id="IPR020606">
    <property type="entry name" value="Ribosomal_uS7_CS"/>
</dbReference>
<dbReference type="InterPro" id="IPR023798">
    <property type="entry name" value="Ribosomal_uS7_dom"/>
</dbReference>
<dbReference type="InterPro" id="IPR036823">
    <property type="entry name" value="Ribosomal_uS7_dom_sf"/>
</dbReference>
<dbReference type="NCBIfam" id="TIGR01029">
    <property type="entry name" value="rpsG_bact"/>
    <property type="match status" value="1"/>
</dbReference>
<dbReference type="PANTHER" id="PTHR11205">
    <property type="entry name" value="RIBOSOMAL PROTEIN S7"/>
    <property type="match status" value="1"/>
</dbReference>
<dbReference type="Pfam" id="PF00177">
    <property type="entry name" value="Ribosomal_S7"/>
    <property type="match status" value="1"/>
</dbReference>
<dbReference type="PIRSF" id="PIRSF002122">
    <property type="entry name" value="RPS7p_RPS7a_RPS5e_RPS7o"/>
    <property type="match status" value="1"/>
</dbReference>
<dbReference type="SUPFAM" id="SSF47973">
    <property type="entry name" value="Ribosomal protein S7"/>
    <property type="match status" value="1"/>
</dbReference>
<dbReference type="PROSITE" id="PS00052">
    <property type="entry name" value="RIBOSOMAL_S7"/>
    <property type="match status" value="1"/>
</dbReference>
<evidence type="ECO:0000255" key="1">
    <source>
        <dbReference type="HAMAP-Rule" id="MF_00480"/>
    </source>
</evidence>
<evidence type="ECO:0000305" key="2"/>
<keyword id="KW-0687">Ribonucleoprotein</keyword>
<keyword id="KW-0689">Ribosomal protein</keyword>
<keyword id="KW-0694">RNA-binding</keyword>
<keyword id="KW-0699">rRNA-binding</keyword>
<keyword id="KW-0820">tRNA-binding</keyword>
<feature type="chain" id="PRO_0000124334" description="Small ribosomal subunit protein uS7">
    <location>
        <begin position="1"/>
        <end position="156"/>
    </location>
</feature>
<comment type="function">
    <text evidence="1">One of the primary rRNA binding proteins, it binds directly to 16S rRNA where it nucleates assembly of the head domain of the 30S subunit. Is located at the subunit interface close to the decoding center, probably blocks exit of the E-site tRNA.</text>
</comment>
<comment type="subunit">
    <text evidence="1">Part of the 30S ribosomal subunit. Contacts proteins S9 and S11.</text>
</comment>
<comment type="similarity">
    <text evidence="1">Belongs to the universal ribosomal protein uS7 family.</text>
</comment>
<gene>
    <name evidence="1" type="primary">rpsG</name>
    <name type="ordered locus">SPA3313</name>
</gene>
<accession>Q5PIW2</accession>
<name>RS7_SALPA</name>